<proteinExistence type="predicted"/>
<feature type="chain" id="PRO_0000253294" description="Uncharacterized protein L794">
    <location>
        <begin position="1"/>
        <end position="364"/>
    </location>
</feature>
<dbReference type="EMBL" id="AY653733">
    <property type="protein sequence ID" value="AAV51054.1"/>
    <property type="molecule type" value="Genomic_DNA"/>
</dbReference>
<dbReference type="KEGG" id="vg:9925456"/>
<dbReference type="OrthoDB" id="31040at10239"/>
<dbReference type="Proteomes" id="UP000001134">
    <property type="component" value="Genome"/>
</dbReference>
<accession>Q5UQ41</accession>
<name>YL794_MIMIV</name>
<organism>
    <name type="scientific">Acanthamoeba polyphaga mimivirus</name>
    <name type="common">APMV</name>
    <dbReference type="NCBI Taxonomy" id="212035"/>
    <lineage>
        <taxon>Viruses</taxon>
        <taxon>Varidnaviria</taxon>
        <taxon>Bamfordvirae</taxon>
        <taxon>Nucleocytoviricota</taxon>
        <taxon>Megaviricetes</taxon>
        <taxon>Imitervirales</taxon>
        <taxon>Mimiviridae</taxon>
        <taxon>Megamimivirinae</taxon>
        <taxon>Mimivirus</taxon>
        <taxon>Mimivirus bradfordmassiliense</taxon>
    </lineage>
</organism>
<protein>
    <recommendedName>
        <fullName>Uncharacterized protein L794</fullName>
    </recommendedName>
</protein>
<reference key="1">
    <citation type="journal article" date="2004" name="Science">
        <title>The 1.2-megabase genome sequence of Mimivirus.</title>
        <authorList>
            <person name="Raoult D."/>
            <person name="Audic S."/>
            <person name="Robert C."/>
            <person name="Abergel C."/>
            <person name="Renesto P."/>
            <person name="Ogata H."/>
            <person name="La Scola B."/>
            <person name="Susan M."/>
            <person name="Claverie J.-M."/>
        </authorList>
    </citation>
    <scope>NUCLEOTIDE SEQUENCE [LARGE SCALE GENOMIC DNA]</scope>
    <source>
        <strain>Rowbotham-Bradford</strain>
    </source>
</reference>
<gene>
    <name type="ordered locus">MIMI_L794</name>
</gene>
<organismHost>
    <name type="scientific">Acanthamoeba polyphaga</name>
    <name type="common">Amoeba</name>
    <dbReference type="NCBI Taxonomy" id="5757"/>
</organismHost>
<sequence>MMNKFFTYYSINAVINCEIESTNPFIIANEIMRVDNSIARSYTIFNSFQNFIDIRYKFPYCHEIIVDHTKCQKSSDPSIDKLMREGGRLVFDIDVAYNEYPNIPDNIQDQIEIIIKHTFNKYFIDIDCDNLDYVWSHCNNPIKLSMHLTVKNILFDNWISMSKFFYGKFVYEWNKHNEWINGNDLIDKQIVKKRTSLRMVGSSKINGNKLVFKDDYCLKDSLIRIYSESDINQLDVININRIKSKYQNQLTTISTVSLKSNNSVYYSNDSNDSTISINPKLFGKLFFLINSLIPNIFRINKINGNIIQLTRLKSAKCLLSDKIHEKENAYLIIKPIDIDQEYYEIIFGCYRQCNLPFTIGKIHV</sequence>
<keyword id="KW-1185">Reference proteome</keyword>